<sequence>MHLTLMNGTLRTAALSGRFALASPSPLPTATPLFQCCQKMSLRTQARPVSTSTTRILLKPSLRPQTSSMCLSPIFRKTAFRLNSTAANASRAEVPKLDWNSFFKLRASRRRYTLASSIIASMASTIIGVQILSEQDLESLGAQVMGLDPFVVLGLATATCGAVGWLAGPFLGNAIWRLVYRKYKPAFLMREKEFFDRIKRFRVDPSSNSIANPVPDYYGEKIGSVQGYRQWLKDQRAYNRKRRSFII</sequence>
<accession>Q4WKN3</accession>
<name>PAM17_ASPFU</name>
<gene>
    <name type="primary">pam17</name>
    <name type="ORF">AFUA_1G01870</name>
</gene>
<reference key="1">
    <citation type="journal article" date="2005" name="Nature">
        <title>Genomic sequence of the pathogenic and allergenic filamentous fungus Aspergillus fumigatus.</title>
        <authorList>
            <person name="Nierman W.C."/>
            <person name="Pain A."/>
            <person name="Anderson M.J."/>
            <person name="Wortman J.R."/>
            <person name="Kim H.S."/>
            <person name="Arroyo J."/>
            <person name="Berriman M."/>
            <person name="Abe K."/>
            <person name="Archer D.B."/>
            <person name="Bermejo C."/>
            <person name="Bennett J.W."/>
            <person name="Bowyer P."/>
            <person name="Chen D."/>
            <person name="Collins M."/>
            <person name="Coulsen R."/>
            <person name="Davies R."/>
            <person name="Dyer P.S."/>
            <person name="Farman M.L."/>
            <person name="Fedorova N."/>
            <person name="Fedorova N.D."/>
            <person name="Feldblyum T.V."/>
            <person name="Fischer R."/>
            <person name="Fosker N."/>
            <person name="Fraser A."/>
            <person name="Garcia J.L."/>
            <person name="Garcia M.J."/>
            <person name="Goble A."/>
            <person name="Goldman G.H."/>
            <person name="Gomi K."/>
            <person name="Griffith-Jones S."/>
            <person name="Gwilliam R."/>
            <person name="Haas B.J."/>
            <person name="Haas H."/>
            <person name="Harris D.E."/>
            <person name="Horiuchi H."/>
            <person name="Huang J."/>
            <person name="Humphray S."/>
            <person name="Jimenez J."/>
            <person name="Keller N."/>
            <person name="Khouri H."/>
            <person name="Kitamoto K."/>
            <person name="Kobayashi T."/>
            <person name="Konzack S."/>
            <person name="Kulkarni R."/>
            <person name="Kumagai T."/>
            <person name="Lafton A."/>
            <person name="Latge J.-P."/>
            <person name="Li W."/>
            <person name="Lord A."/>
            <person name="Lu C."/>
            <person name="Majoros W.H."/>
            <person name="May G.S."/>
            <person name="Miller B.L."/>
            <person name="Mohamoud Y."/>
            <person name="Molina M."/>
            <person name="Monod M."/>
            <person name="Mouyna I."/>
            <person name="Mulligan S."/>
            <person name="Murphy L.D."/>
            <person name="O'Neil S."/>
            <person name="Paulsen I."/>
            <person name="Penalva M.A."/>
            <person name="Pertea M."/>
            <person name="Price C."/>
            <person name="Pritchard B.L."/>
            <person name="Quail M.A."/>
            <person name="Rabbinowitsch E."/>
            <person name="Rawlins N."/>
            <person name="Rajandream M.A."/>
            <person name="Reichard U."/>
            <person name="Renauld H."/>
            <person name="Robson G.D."/>
            <person name="Rodriguez de Cordoba S."/>
            <person name="Rodriguez-Pena J.M."/>
            <person name="Ronning C.M."/>
            <person name="Rutter S."/>
            <person name="Salzberg S.L."/>
            <person name="Sanchez M."/>
            <person name="Sanchez-Ferrero J.C."/>
            <person name="Saunders D."/>
            <person name="Seeger K."/>
            <person name="Squares R."/>
            <person name="Squares S."/>
            <person name="Takeuchi M."/>
            <person name="Tekaia F."/>
            <person name="Turner G."/>
            <person name="Vazquez de Aldana C.R."/>
            <person name="Weidman J."/>
            <person name="White O."/>
            <person name="Woodward J.R."/>
            <person name="Yu J.-H."/>
            <person name="Fraser C.M."/>
            <person name="Galagan J.E."/>
            <person name="Asai K."/>
            <person name="Machida M."/>
            <person name="Hall N."/>
            <person name="Barrell B.G."/>
            <person name="Denning D.W."/>
        </authorList>
    </citation>
    <scope>NUCLEOTIDE SEQUENCE [LARGE SCALE GENOMIC DNA]</scope>
    <source>
        <strain>ATCC MYA-4609 / CBS 101355 / FGSC A1100 / Af293</strain>
    </source>
</reference>
<feature type="transit peptide" description="Mitochondrion" evidence="2">
    <location>
        <begin position="1"/>
        <end position="49"/>
    </location>
</feature>
<feature type="chain" id="PRO_0000043150" description="Presequence translocated-associated motor subunit pam17, mitochondrial">
    <location>
        <begin position="50"/>
        <end position="247"/>
    </location>
</feature>
<feature type="transmembrane region" description="Helical" evidence="2">
    <location>
        <begin position="112"/>
        <end position="132"/>
    </location>
</feature>
<feature type="transmembrane region" description="Helical" evidence="2">
    <location>
        <begin position="150"/>
        <end position="170"/>
    </location>
</feature>
<comment type="function">
    <text evidence="1">Component of the PAM complex, a complex required for the translocation of transit peptide-containing proteins from the inner membrane into the mitochondrial matrix in an ATP-dependent manner.</text>
</comment>
<comment type="subunit">
    <text evidence="1">Component of the PAM complex, at least composed of mtHsp70, MGE1/mgeA, tim44, PAM16/pamP, PAM17/pamQ and PAM18/pamR.</text>
</comment>
<comment type="subcellular location">
    <subcellularLocation>
        <location evidence="1">Mitochondrion inner membrane</location>
        <topology evidence="1">Multi-pass membrane protein</topology>
    </subcellularLocation>
</comment>
<comment type="similarity">
    <text evidence="3">Belongs to the PAM17 family.</text>
</comment>
<evidence type="ECO:0000250" key="1"/>
<evidence type="ECO:0000255" key="2"/>
<evidence type="ECO:0000305" key="3"/>
<keyword id="KW-0472">Membrane</keyword>
<keyword id="KW-0496">Mitochondrion</keyword>
<keyword id="KW-0999">Mitochondrion inner membrane</keyword>
<keyword id="KW-0653">Protein transport</keyword>
<keyword id="KW-1185">Reference proteome</keyword>
<keyword id="KW-0809">Transit peptide</keyword>
<keyword id="KW-0811">Translocation</keyword>
<keyword id="KW-0812">Transmembrane</keyword>
<keyword id="KW-1133">Transmembrane helix</keyword>
<keyword id="KW-0813">Transport</keyword>
<organism>
    <name type="scientific">Aspergillus fumigatus (strain ATCC MYA-4609 / CBS 101355 / FGSC A1100 / Af293)</name>
    <name type="common">Neosartorya fumigata</name>
    <dbReference type="NCBI Taxonomy" id="330879"/>
    <lineage>
        <taxon>Eukaryota</taxon>
        <taxon>Fungi</taxon>
        <taxon>Dikarya</taxon>
        <taxon>Ascomycota</taxon>
        <taxon>Pezizomycotina</taxon>
        <taxon>Eurotiomycetes</taxon>
        <taxon>Eurotiomycetidae</taxon>
        <taxon>Eurotiales</taxon>
        <taxon>Aspergillaceae</taxon>
        <taxon>Aspergillus</taxon>
        <taxon>Aspergillus subgen. Fumigati</taxon>
    </lineage>
</organism>
<protein>
    <recommendedName>
        <fullName>Presequence translocated-associated motor subunit pam17, mitochondrial</fullName>
    </recommendedName>
</protein>
<dbReference type="EMBL" id="AAHF01000007">
    <property type="protein sequence ID" value="EAL87899.1"/>
    <property type="molecule type" value="Genomic_DNA"/>
</dbReference>
<dbReference type="RefSeq" id="XP_749937.1">
    <property type="nucleotide sequence ID" value="XM_744844.1"/>
</dbReference>
<dbReference type="FunCoup" id="Q4WKN3">
    <property type="interactions" value="48"/>
</dbReference>
<dbReference type="STRING" id="330879.Q4WKN3"/>
<dbReference type="EnsemblFungi" id="EAL87899">
    <property type="protein sequence ID" value="EAL87899"/>
    <property type="gene ID" value="AFUA_1G01870"/>
</dbReference>
<dbReference type="GeneID" id="3507834"/>
<dbReference type="KEGG" id="afm:AFUA_1G01870"/>
<dbReference type="VEuPathDB" id="FungiDB:Afu1g01870"/>
<dbReference type="eggNOG" id="ENOG502S1B1">
    <property type="taxonomic scope" value="Eukaryota"/>
</dbReference>
<dbReference type="HOGENOM" id="CLU_068297_0_1_1"/>
<dbReference type="InParanoid" id="Q4WKN3"/>
<dbReference type="OMA" id="MIFGFDP"/>
<dbReference type="OrthoDB" id="5970083at2759"/>
<dbReference type="Proteomes" id="UP000002530">
    <property type="component" value="Chromosome 1"/>
</dbReference>
<dbReference type="GO" id="GO:0001405">
    <property type="term" value="C:PAM complex, Tim23 associated import motor"/>
    <property type="evidence" value="ECO:0000318"/>
    <property type="project" value="GO_Central"/>
</dbReference>
<dbReference type="GO" id="GO:0030150">
    <property type="term" value="P:protein import into mitochondrial matrix"/>
    <property type="evidence" value="ECO:0000318"/>
    <property type="project" value="GO_Central"/>
</dbReference>
<dbReference type="InterPro" id="IPR013875">
    <property type="entry name" value="Pam17"/>
</dbReference>
<dbReference type="PANTHER" id="PTHR28021">
    <property type="entry name" value="PRESEQUENCE TRANSLOCATED-ASSOCIATED MOTOR SUBUNIT PAM17, MITOCHONDRIAL"/>
    <property type="match status" value="1"/>
</dbReference>
<dbReference type="PANTHER" id="PTHR28021:SF1">
    <property type="entry name" value="PRESEQUENCE TRANSLOCATED-ASSOCIATED MOTOR SUBUNIT PAM17, MITOCHONDRIAL"/>
    <property type="match status" value="1"/>
</dbReference>
<dbReference type="Pfam" id="PF08566">
    <property type="entry name" value="Pam17"/>
    <property type="match status" value="1"/>
</dbReference>
<proteinExistence type="inferred from homology"/>